<protein>
    <recommendedName>
        <fullName evidence="1">Glutaminase</fullName>
        <ecNumber evidence="1">3.5.1.2</ecNumber>
    </recommendedName>
</protein>
<proteinExistence type="inferred from homology"/>
<accession>Q8XQS6</accession>
<reference key="1">
    <citation type="journal article" date="2002" name="Nature">
        <title>Genome sequence of the plant pathogen Ralstonia solanacearum.</title>
        <authorList>
            <person name="Salanoubat M."/>
            <person name="Genin S."/>
            <person name="Artiguenave F."/>
            <person name="Gouzy J."/>
            <person name="Mangenot S."/>
            <person name="Arlat M."/>
            <person name="Billault A."/>
            <person name="Brottier P."/>
            <person name="Camus J.-C."/>
            <person name="Cattolico L."/>
            <person name="Chandler M."/>
            <person name="Choisne N."/>
            <person name="Claudel-Renard C."/>
            <person name="Cunnac S."/>
            <person name="Demange N."/>
            <person name="Gaspin C."/>
            <person name="Lavie M."/>
            <person name="Moisan A."/>
            <person name="Robert C."/>
            <person name="Saurin W."/>
            <person name="Schiex T."/>
            <person name="Siguier P."/>
            <person name="Thebault P."/>
            <person name="Whalen M."/>
            <person name="Wincker P."/>
            <person name="Levy M."/>
            <person name="Weissenbach J."/>
            <person name="Boucher C.A."/>
        </authorList>
    </citation>
    <scope>NUCLEOTIDE SEQUENCE [LARGE SCALE GENOMIC DNA]</scope>
    <source>
        <strain>ATCC BAA-1114 / GMI1000</strain>
    </source>
</reference>
<evidence type="ECO:0000255" key="1">
    <source>
        <dbReference type="HAMAP-Rule" id="MF_00313"/>
    </source>
</evidence>
<comment type="catalytic activity">
    <reaction evidence="1">
        <text>L-glutamine + H2O = L-glutamate + NH4(+)</text>
        <dbReference type="Rhea" id="RHEA:15889"/>
        <dbReference type="ChEBI" id="CHEBI:15377"/>
        <dbReference type="ChEBI" id="CHEBI:28938"/>
        <dbReference type="ChEBI" id="CHEBI:29985"/>
        <dbReference type="ChEBI" id="CHEBI:58359"/>
        <dbReference type="EC" id="3.5.1.2"/>
    </reaction>
</comment>
<comment type="subunit">
    <text evidence="1">Homotetramer.</text>
</comment>
<comment type="similarity">
    <text evidence="1">Belongs to the glutaminase family.</text>
</comment>
<geneLocation type="plasmid">
    <name>megaplasmid Rsp</name>
</geneLocation>
<name>GLSA_RALN1</name>
<gene>
    <name evidence="1" type="primary">glsA</name>
    <name type="ordered locus">RSp1143</name>
    <name type="ORF">RS05469</name>
</gene>
<feature type="chain" id="PRO_0000110618" description="Glutaminase">
    <location>
        <begin position="1"/>
        <end position="304"/>
    </location>
</feature>
<feature type="binding site" evidence="1">
    <location>
        <position position="63"/>
    </location>
    <ligand>
        <name>substrate</name>
    </ligand>
</feature>
<feature type="binding site" evidence="1">
    <location>
        <position position="113"/>
    </location>
    <ligand>
        <name>substrate</name>
    </ligand>
</feature>
<feature type="binding site" evidence="1">
    <location>
        <position position="157"/>
    </location>
    <ligand>
        <name>substrate</name>
    </ligand>
</feature>
<feature type="binding site" evidence="1">
    <location>
        <position position="164"/>
    </location>
    <ligand>
        <name>substrate</name>
    </ligand>
</feature>
<feature type="binding site" evidence="1">
    <location>
        <position position="188"/>
    </location>
    <ligand>
        <name>substrate</name>
    </ligand>
</feature>
<feature type="binding site" evidence="1">
    <location>
        <position position="240"/>
    </location>
    <ligand>
        <name>substrate</name>
    </ligand>
</feature>
<feature type="binding site" evidence="1">
    <location>
        <position position="258"/>
    </location>
    <ligand>
        <name>substrate</name>
    </ligand>
</feature>
<keyword id="KW-0378">Hydrolase</keyword>
<keyword id="KW-0614">Plasmid</keyword>
<keyword id="KW-1185">Reference proteome</keyword>
<sequence length="304" mass="33262">MDYQAILETIHRDIQPWLGKGRVADYIPELAKASATDFGMAIVTPRGEVFRVGQAETLFSIQSISKLFACTLAFQLEGESLWQRVGREPSGNAFNSLVQLEHENGIPRNPFINAGALVVTDVLCRRFVQAETAMVQFMRRLVDNPRVDYNPRVALSELEHADRNRAMAHFMRSFGNLHMPVETVIDAYCRQCAIEMHCVDLARAVLFLANGGVVPWSGERVIETSPAKRLSALMLTCGTYDAAGDFVYRVGLPAKSGVGGGIVAVLPGEFGVCVWSPGLDVSGNSLAGLQALEWLTTLSGRSIF</sequence>
<organism>
    <name type="scientific">Ralstonia nicotianae (strain ATCC BAA-1114 / GMI1000)</name>
    <name type="common">Ralstonia solanacearum</name>
    <dbReference type="NCBI Taxonomy" id="267608"/>
    <lineage>
        <taxon>Bacteria</taxon>
        <taxon>Pseudomonadati</taxon>
        <taxon>Pseudomonadota</taxon>
        <taxon>Betaproteobacteria</taxon>
        <taxon>Burkholderiales</taxon>
        <taxon>Burkholderiaceae</taxon>
        <taxon>Ralstonia</taxon>
        <taxon>Ralstonia solanacearum species complex</taxon>
    </lineage>
</organism>
<dbReference type="EC" id="3.5.1.2" evidence="1"/>
<dbReference type="EMBL" id="AL646053">
    <property type="protein sequence ID" value="CAD18294.1"/>
    <property type="molecule type" value="Genomic_DNA"/>
</dbReference>
<dbReference type="RefSeq" id="WP_011004432.1">
    <property type="nucleotide sequence ID" value="NC_003296.1"/>
</dbReference>
<dbReference type="SMR" id="Q8XQS6"/>
<dbReference type="STRING" id="267608.RSp1143"/>
<dbReference type="EnsemblBacteria" id="CAD18294">
    <property type="protein sequence ID" value="CAD18294"/>
    <property type="gene ID" value="RSp1143"/>
</dbReference>
<dbReference type="KEGG" id="rso:RSp1143"/>
<dbReference type="eggNOG" id="COG2066">
    <property type="taxonomic scope" value="Bacteria"/>
</dbReference>
<dbReference type="HOGENOM" id="CLU_027932_1_1_4"/>
<dbReference type="Proteomes" id="UP000001436">
    <property type="component" value="Plasmid megaplasmid Rsp"/>
</dbReference>
<dbReference type="GO" id="GO:0004359">
    <property type="term" value="F:glutaminase activity"/>
    <property type="evidence" value="ECO:0007669"/>
    <property type="project" value="UniProtKB-UniRule"/>
</dbReference>
<dbReference type="GO" id="GO:0006537">
    <property type="term" value="P:glutamate biosynthetic process"/>
    <property type="evidence" value="ECO:0007669"/>
    <property type="project" value="TreeGrafter"/>
</dbReference>
<dbReference type="GO" id="GO:0006543">
    <property type="term" value="P:glutamine catabolic process"/>
    <property type="evidence" value="ECO:0007669"/>
    <property type="project" value="TreeGrafter"/>
</dbReference>
<dbReference type="FunFam" id="3.40.710.10:FF:000005">
    <property type="entry name" value="Glutaminase"/>
    <property type="match status" value="1"/>
</dbReference>
<dbReference type="Gene3D" id="3.40.710.10">
    <property type="entry name" value="DD-peptidase/beta-lactamase superfamily"/>
    <property type="match status" value="1"/>
</dbReference>
<dbReference type="HAMAP" id="MF_00313">
    <property type="entry name" value="Glutaminase"/>
    <property type="match status" value="1"/>
</dbReference>
<dbReference type="InterPro" id="IPR012338">
    <property type="entry name" value="Beta-lactam/transpept-like"/>
</dbReference>
<dbReference type="InterPro" id="IPR015868">
    <property type="entry name" value="Glutaminase"/>
</dbReference>
<dbReference type="NCBIfam" id="TIGR03814">
    <property type="entry name" value="Gln_ase"/>
    <property type="match status" value="1"/>
</dbReference>
<dbReference type="NCBIfam" id="NF002132">
    <property type="entry name" value="PRK00971.1-1"/>
    <property type="match status" value="1"/>
</dbReference>
<dbReference type="NCBIfam" id="NF002133">
    <property type="entry name" value="PRK00971.1-2"/>
    <property type="match status" value="1"/>
</dbReference>
<dbReference type="PANTHER" id="PTHR12544">
    <property type="entry name" value="GLUTAMINASE"/>
    <property type="match status" value="1"/>
</dbReference>
<dbReference type="PANTHER" id="PTHR12544:SF29">
    <property type="entry name" value="GLUTAMINASE"/>
    <property type="match status" value="1"/>
</dbReference>
<dbReference type="Pfam" id="PF04960">
    <property type="entry name" value="Glutaminase"/>
    <property type="match status" value="1"/>
</dbReference>
<dbReference type="SUPFAM" id="SSF56601">
    <property type="entry name" value="beta-lactamase/transpeptidase-like"/>
    <property type="match status" value="1"/>
</dbReference>